<feature type="chain" id="PRO_1000012214" description="Lipoyl synthase">
    <location>
        <begin position="1"/>
        <end position="321"/>
    </location>
</feature>
<feature type="domain" description="Radical SAM core" evidence="2">
    <location>
        <begin position="80"/>
        <end position="297"/>
    </location>
</feature>
<feature type="binding site" evidence="1">
    <location>
        <position position="68"/>
    </location>
    <ligand>
        <name>[4Fe-4S] cluster</name>
        <dbReference type="ChEBI" id="CHEBI:49883"/>
        <label>1</label>
    </ligand>
</feature>
<feature type="binding site" evidence="1">
    <location>
        <position position="73"/>
    </location>
    <ligand>
        <name>[4Fe-4S] cluster</name>
        <dbReference type="ChEBI" id="CHEBI:49883"/>
        <label>1</label>
    </ligand>
</feature>
<feature type="binding site" evidence="1">
    <location>
        <position position="79"/>
    </location>
    <ligand>
        <name>[4Fe-4S] cluster</name>
        <dbReference type="ChEBI" id="CHEBI:49883"/>
        <label>1</label>
    </ligand>
</feature>
<feature type="binding site" evidence="1">
    <location>
        <position position="94"/>
    </location>
    <ligand>
        <name>[4Fe-4S] cluster</name>
        <dbReference type="ChEBI" id="CHEBI:49883"/>
        <label>2</label>
        <note>4Fe-4S-S-AdoMet</note>
    </ligand>
</feature>
<feature type="binding site" evidence="1">
    <location>
        <position position="98"/>
    </location>
    <ligand>
        <name>[4Fe-4S] cluster</name>
        <dbReference type="ChEBI" id="CHEBI:49883"/>
        <label>2</label>
        <note>4Fe-4S-S-AdoMet</note>
    </ligand>
</feature>
<feature type="binding site" evidence="1">
    <location>
        <position position="101"/>
    </location>
    <ligand>
        <name>[4Fe-4S] cluster</name>
        <dbReference type="ChEBI" id="CHEBI:49883"/>
        <label>2</label>
        <note>4Fe-4S-S-AdoMet</note>
    </ligand>
</feature>
<feature type="binding site" evidence="1">
    <location>
        <position position="308"/>
    </location>
    <ligand>
        <name>[4Fe-4S] cluster</name>
        <dbReference type="ChEBI" id="CHEBI:49883"/>
        <label>1</label>
    </ligand>
</feature>
<protein>
    <recommendedName>
        <fullName evidence="1">Lipoyl synthase</fullName>
        <ecNumber evidence="1">2.8.1.8</ecNumber>
    </recommendedName>
    <alternativeName>
        <fullName evidence="1">Lip-syn</fullName>
        <shortName evidence="1">LS</shortName>
    </alternativeName>
    <alternativeName>
        <fullName evidence="1">Lipoate synthase</fullName>
    </alternativeName>
    <alternativeName>
        <fullName evidence="1">Lipoic acid synthase</fullName>
    </alternativeName>
    <alternativeName>
        <fullName evidence="1">Sulfur insertion protein LipA</fullName>
    </alternativeName>
</protein>
<keyword id="KW-0004">4Fe-4S</keyword>
<keyword id="KW-0963">Cytoplasm</keyword>
<keyword id="KW-0408">Iron</keyword>
<keyword id="KW-0411">Iron-sulfur</keyword>
<keyword id="KW-0479">Metal-binding</keyword>
<keyword id="KW-0949">S-adenosyl-L-methionine</keyword>
<keyword id="KW-0808">Transferase</keyword>
<proteinExistence type="inferred from homology"/>
<accession>Q0TK45</accession>
<name>LIPA_ECOL5</name>
<comment type="function">
    <text evidence="1">Catalyzes the radical-mediated insertion of two sulfur atoms into the C-6 and C-8 positions of the octanoyl moiety bound to the lipoyl domains of lipoate-dependent enzymes, thereby converting the octanoylated domains into lipoylated derivatives.</text>
</comment>
<comment type="catalytic activity">
    <reaction evidence="1">
        <text>[[Fe-S] cluster scaffold protein carrying a second [4Fe-4S](2+) cluster] + N(6)-octanoyl-L-lysyl-[protein] + 2 oxidized [2Fe-2S]-[ferredoxin] + 2 S-adenosyl-L-methionine + 4 H(+) = [[Fe-S] cluster scaffold protein] + N(6)-[(R)-dihydrolipoyl]-L-lysyl-[protein] + 4 Fe(3+) + 2 hydrogen sulfide + 2 5'-deoxyadenosine + 2 L-methionine + 2 reduced [2Fe-2S]-[ferredoxin]</text>
        <dbReference type="Rhea" id="RHEA:16585"/>
        <dbReference type="Rhea" id="RHEA-COMP:9928"/>
        <dbReference type="Rhea" id="RHEA-COMP:10000"/>
        <dbReference type="Rhea" id="RHEA-COMP:10001"/>
        <dbReference type="Rhea" id="RHEA-COMP:10475"/>
        <dbReference type="Rhea" id="RHEA-COMP:14568"/>
        <dbReference type="Rhea" id="RHEA-COMP:14569"/>
        <dbReference type="ChEBI" id="CHEBI:15378"/>
        <dbReference type="ChEBI" id="CHEBI:17319"/>
        <dbReference type="ChEBI" id="CHEBI:29034"/>
        <dbReference type="ChEBI" id="CHEBI:29919"/>
        <dbReference type="ChEBI" id="CHEBI:33722"/>
        <dbReference type="ChEBI" id="CHEBI:33737"/>
        <dbReference type="ChEBI" id="CHEBI:33738"/>
        <dbReference type="ChEBI" id="CHEBI:57844"/>
        <dbReference type="ChEBI" id="CHEBI:59789"/>
        <dbReference type="ChEBI" id="CHEBI:78809"/>
        <dbReference type="ChEBI" id="CHEBI:83100"/>
        <dbReference type="EC" id="2.8.1.8"/>
    </reaction>
</comment>
<comment type="cofactor">
    <cofactor evidence="1">
        <name>[4Fe-4S] cluster</name>
        <dbReference type="ChEBI" id="CHEBI:49883"/>
    </cofactor>
    <text evidence="1">Binds 2 [4Fe-4S] clusters per subunit. One cluster is coordinated with 3 cysteines and an exchangeable S-adenosyl-L-methionine.</text>
</comment>
<comment type="pathway">
    <text evidence="1">Protein modification; protein lipoylation via endogenous pathway; protein N(6)-(lipoyl)lysine from octanoyl-[acyl-carrier-protein]: step 2/2.</text>
</comment>
<comment type="subcellular location">
    <subcellularLocation>
        <location evidence="1">Cytoplasm</location>
    </subcellularLocation>
</comment>
<comment type="similarity">
    <text evidence="1">Belongs to the radical SAM superfamily. Lipoyl synthase family.</text>
</comment>
<dbReference type="EC" id="2.8.1.8" evidence="1"/>
<dbReference type="EMBL" id="CP000247">
    <property type="protein sequence ID" value="ABG68686.1"/>
    <property type="molecule type" value="Genomic_DNA"/>
</dbReference>
<dbReference type="RefSeq" id="WP_000042632.1">
    <property type="nucleotide sequence ID" value="NC_008253.1"/>
</dbReference>
<dbReference type="SMR" id="Q0TK45"/>
<dbReference type="GeneID" id="93776854"/>
<dbReference type="KEGG" id="ecp:ECP_0658"/>
<dbReference type="HOGENOM" id="CLU_033144_2_1_6"/>
<dbReference type="UniPathway" id="UPA00538">
    <property type="reaction ID" value="UER00593"/>
</dbReference>
<dbReference type="Proteomes" id="UP000009182">
    <property type="component" value="Chromosome"/>
</dbReference>
<dbReference type="GO" id="GO:0005737">
    <property type="term" value="C:cytoplasm"/>
    <property type="evidence" value="ECO:0007669"/>
    <property type="project" value="UniProtKB-SubCell"/>
</dbReference>
<dbReference type="GO" id="GO:0051539">
    <property type="term" value="F:4 iron, 4 sulfur cluster binding"/>
    <property type="evidence" value="ECO:0007669"/>
    <property type="project" value="UniProtKB-UniRule"/>
</dbReference>
<dbReference type="GO" id="GO:0016992">
    <property type="term" value="F:lipoate synthase activity"/>
    <property type="evidence" value="ECO:0007669"/>
    <property type="project" value="UniProtKB-UniRule"/>
</dbReference>
<dbReference type="GO" id="GO:0046872">
    <property type="term" value="F:metal ion binding"/>
    <property type="evidence" value="ECO:0007669"/>
    <property type="project" value="UniProtKB-KW"/>
</dbReference>
<dbReference type="CDD" id="cd01335">
    <property type="entry name" value="Radical_SAM"/>
    <property type="match status" value="1"/>
</dbReference>
<dbReference type="FunFam" id="3.20.20.70:FF:000023">
    <property type="entry name" value="Lipoyl synthase"/>
    <property type="match status" value="1"/>
</dbReference>
<dbReference type="Gene3D" id="3.20.20.70">
    <property type="entry name" value="Aldolase class I"/>
    <property type="match status" value="1"/>
</dbReference>
<dbReference type="HAMAP" id="MF_00206">
    <property type="entry name" value="Lipoyl_synth"/>
    <property type="match status" value="1"/>
</dbReference>
<dbReference type="InterPro" id="IPR013785">
    <property type="entry name" value="Aldolase_TIM"/>
</dbReference>
<dbReference type="InterPro" id="IPR006638">
    <property type="entry name" value="Elp3/MiaA/NifB-like_rSAM"/>
</dbReference>
<dbReference type="InterPro" id="IPR031691">
    <property type="entry name" value="LIAS_N"/>
</dbReference>
<dbReference type="InterPro" id="IPR003698">
    <property type="entry name" value="Lipoyl_synth"/>
</dbReference>
<dbReference type="InterPro" id="IPR007197">
    <property type="entry name" value="rSAM"/>
</dbReference>
<dbReference type="NCBIfam" id="TIGR00510">
    <property type="entry name" value="lipA"/>
    <property type="match status" value="1"/>
</dbReference>
<dbReference type="NCBIfam" id="NF004019">
    <property type="entry name" value="PRK05481.1"/>
    <property type="match status" value="1"/>
</dbReference>
<dbReference type="NCBIfam" id="NF009544">
    <property type="entry name" value="PRK12928.1"/>
    <property type="match status" value="1"/>
</dbReference>
<dbReference type="PANTHER" id="PTHR10949">
    <property type="entry name" value="LIPOYL SYNTHASE"/>
    <property type="match status" value="1"/>
</dbReference>
<dbReference type="PANTHER" id="PTHR10949:SF0">
    <property type="entry name" value="LIPOYL SYNTHASE, MITOCHONDRIAL"/>
    <property type="match status" value="1"/>
</dbReference>
<dbReference type="Pfam" id="PF16881">
    <property type="entry name" value="LIAS_N"/>
    <property type="match status" value="1"/>
</dbReference>
<dbReference type="Pfam" id="PF04055">
    <property type="entry name" value="Radical_SAM"/>
    <property type="match status" value="1"/>
</dbReference>
<dbReference type="PIRSF" id="PIRSF005963">
    <property type="entry name" value="Lipoyl_synth"/>
    <property type="match status" value="1"/>
</dbReference>
<dbReference type="SFLD" id="SFLDF00271">
    <property type="entry name" value="lipoyl_synthase"/>
    <property type="match status" value="1"/>
</dbReference>
<dbReference type="SFLD" id="SFLDG01058">
    <property type="entry name" value="lipoyl_synthase_like"/>
    <property type="match status" value="1"/>
</dbReference>
<dbReference type="SMART" id="SM00729">
    <property type="entry name" value="Elp3"/>
    <property type="match status" value="1"/>
</dbReference>
<dbReference type="SUPFAM" id="SSF102114">
    <property type="entry name" value="Radical SAM enzymes"/>
    <property type="match status" value="1"/>
</dbReference>
<dbReference type="PROSITE" id="PS51918">
    <property type="entry name" value="RADICAL_SAM"/>
    <property type="match status" value="1"/>
</dbReference>
<gene>
    <name evidence="1" type="primary">lipA</name>
    <name type="ordered locus">ECP_0658</name>
</gene>
<reference key="1">
    <citation type="journal article" date="2006" name="Mol. Microbiol.">
        <title>Role of pathogenicity island-associated integrases in the genome plasticity of uropathogenic Escherichia coli strain 536.</title>
        <authorList>
            <person name="Hochhut B."/>
            <person name="Wilde C."/>
            <person name="Balling G."/>
            <person name="Middendorf B."/>
            <person name="Dobrindt U."/>
            <person name="Brzuszkiewicz E."/>
            <person name="Gottschalk G."/>
            <person name="Carniel E."/>
            <person name="Hacker J."/>
        </authorList>
    </citation>
    <scope>NUCLEOTIDE SEQUENCE [LARGE SCALE GENOMIC DNA]</scope>
    <source>
        <strain>536 / UPEC</strain>
    </source>
</reference>
<organism>
    <name type="scientific">Escherichia coli O6:K15:H31 (strain 536 / UPEC)</name>
    <dbReference type="NCBI Taxonomy" id="362663"/>
    <lineage>
        <taxon>Bacteria</taxon>
        <taxon>Pseudomonadati</taxon>
        <taxon>Pseudomonadota</taxon>
        <taxon>Gammaproteobacteria</taxon>
        <taxon>Enterobacterales</taxon>
        <taxon>Enterobacteriaceae</taxon>
        <taxon>Escherichia</taxon>
    </lineage>
</organism>
<evidence type="ECO:0000255" key="1">
    <source>
        <dbReference type="HAMAP-Rule" id="MF_00206"/>
    </source>
</evidence>
<evidence type="ECO:0000255" key="2">
    <source>
        <dbReference type="PROSITE-ProRule" id="PRU01266"/>
    </source>
</evidence>
<sequence>MSKPIVMERGVKYRDADKMALIPVKNVATEREALLRKPEWMKIKLPADSTRIQGIKAAMRKNGLHSVCEEASCPNLAECFNHGTATFMILGAICTRRCPFCDVAHGRPVAPDANEPVKLAQTIADMALRYVVITSVDRDDLRDGGAQHFADCITAIREKSPQIKIETLVPDFRGRMDRALDILTATPPDVFNHNLENVPRIYRQVRPGADYNWSLKLLERFKEAHPEIPTKSGLMVGLGETNEEIIEVMRDLRRHGVTMLTLGQYLQPSRHHLPVQRYVSPDEFDEMKAEALAMGFTHAACGPFVRSSYHADLQAKGMEVK</sequence>